<gene>
    <name type="primary">hb</name>
</gene>
<evidence type="ECO:0000255" key="1">
    <source>
        <dbReference type="PROSITE-ProRule" id="PRU00042"/>
    </source>
</evidence>
<evidence type="ECO:0000305" key="2"/>
<organism>
    <name type="scientific">Schultesia lampyridiformis</name>
    <name type="common">Firefly mimic roach</name>
    <dbReference type="NCBI Taxonomy" id="36965"/>
    <lineage>
        <taxon>Eukaryota</taxon>
        <taxon>Metazoa</taxon>
        <taxon>Ecdysozoa</taxon>
        <taxon>Arthropoda</taxon>
        <taxon>Hexapoda</taxon>
        <taxon>Insecta</taxon>
        <taxon>Pterygota</taxon>
        <taxon>Neoptera</taxon>
        <taxon>Polyneoptera</taxon>
        <taxon>Dictyoptera</taxon>
        <taxon>Blattodea</taxon>
        <taxon>Blaberoidea</taxon>
        <taxon>Blaberidae</taxon>
        <taxon>Zetoborinae</taxon>
        <taxon>Schultesia</taxon>
    </lineage>
</organism>
<proteinExistence type="inferred from homology"/>
<reference key="1">
    <citation type="journal article" date="1992" name="Proc. Natl. Acad. Sci. U.S.A.">
        <title>Evolutionary conservation pattern of zinc-finger domains of Drosophila segmentation genes.</title>
        <authorList>
            <person name="Sommer R.J."/>
            <person name="Retzlaff M."/>
            <person name="Goerlich K."/>
            <person name="Sander K."/>
            <person name="Tautz D."/>
        </authorList>
    </citation>
    <scope>NUCLEOTIDE SEQUENCE [GENOMIC DNA]</scope>
</reference>
<sequence length="50" mass="5835">HIRNHFGSKPFKCNKCSYSCVNKSMLNSHLKSHSNVYQYRCADCAYATKY</sequence>
<dbReference type="EMBL" id="L01611">
    <property type="protein sequence ID" value="AAA29963.1"/>
    <property type="molecule type" value="Genomic_DNA"/>
</dbReference>
<dbReference type="SMR" id="Q02033"/>
<dbReference type="GO" id="GO:0005634">
    <property type="term" value="C:nucleus"/>
    <property type="evidence" value="ECO:0007669"/>
    <property type="project" value="UniProtKB-SubCell"/>
</dbReference>
<dbReference type="GO" id="GO:0003677">
    <property type="term" value="F:DNA binding"/>
    <property type="evidence" value="ECO:0007669"/>
    <property type="project" value="UniProtKB-KW"/>
</dbReference>
<dbReference type="GO" id="GO:0008270">
    <property type="term" value="F:zinc ion binding"/>
    <property type="evidence" value="ECO:0007669"/>
    <property type="project" value="UniProtKB-KW"/>
</dbReference>
<dbReference type="GO" id="GO:0035282">
    <property type="term" value="P:segmentation"/>
    <property type="evidence" value="ECO:0007669"/>
    <property type="project" value="UniProtKB-KW"/>
</dbReference>
<dbReference type="FunFam" id="3.30.160.60:FF:000065">
    <property type="entry name" value="B-cell CLL/lymphoma 6, member B"/>
    <property type="match status" value="1"/>
</dbReference>
<dbReference type="Gene3D" id="3.30.160.60">
    <property type="entry name" value="Classic Zinc Finger"/>
    <property type="match status" value="1"/>
</dbReference>
<dbReference type="InterPro" id="IPR036236">
    <property type="entry name" value="Znf_C2H2_sf"/>
</dbReference>
<dbReference type="InterPro" id="IPR013087">
    <property type="entry name" value="Znf_C2H2_type"/>
</dbReference>
<dbReference type="PANTHER" id="PTHR24392:SF49">
    <property type="entry name" value="PROTEIN HUNCHBACK"/>
    <property type="match status" value="1"/>
</dbReference>
<dbReference type="PANTHER" id="PTHR24392">
    <property type="entry name" value="ZINC FINGER PROTEIN"/>
    <property type="match status" value="1"/>
</dbReference>
<dbReference type="SMART" id="SM00355">
    <property type="entry name" value="ZnF_C2H2"/>
    <property type="match status" value="1"/>
</dbReference>
<dbReference type="SUPFAM" id="SSF57667">
    <property type="entry name" value="beta-beta-alpha zinc fingers"/>
    <property type="match status" value="1"/>
</dbReference>
<dbReference type="PROSITE" id="PS00028">
    <property type="entry name" value="ZINC_FINGER_C2H2_1"/>
    <property type="match status" value="1"/>
</dbReference>
<dbReference type="PROSITE" id="PS50157">
    <property type="entry name" value="ZINC_FINGER_C2H2_2"/>
    <property type="match status" value="1"/>
</dbReference>
<comment type="function">
    <text>Gap class segmentation protein that controls development of head structures.</text>
</comment>
<comment type="subcellular location">
    <subcellularLocation>
        <location evidence="2">Nucleus</location>
    </subcellularLocation>
</comment>
<comment type="similarity">
    <text evidence="2">Belongs to the hunchback C2H2-type zinc-finger protein family.</text>
</comment>
<feature type="chain" id="PRO_0000046982" description="Protein hunchback">
    <location>
        <begin position="1" status="less than"/>
        <end position="50" status="greater than"/>
    </location>
</feature>
<feature type="zinc finger region" description="C2H2-type 1" evidence="1">
    <location>
        <begin position="1" status="less than"/>
        <end position="5"/>
    </location>
</feature>
<feature type="zinc finger region" description="C2H2-type 2" evidence="1">
    <location>
        <begin position="11"/>
        <end position="33"/>
    </location>
</feature>
<feature type="zinc finger region" description="C2H2-type 3" evidence="1">
    <location>
        <begin position="39"/>
        <end position="50" status="greater than"/>
    </location>
</feature>
<feature type="non-terminal residue">
    <location>
        <position position="1"/>
    </location>
</feature>
<feature type="non-terminal residue">
    <location>
        <position position="50"/>
    </location>
</feature>
<protein>
    <recommendedName>
        <fullName>Protein hunchback</fullName>
    </recommendedName>
</protein>
<accession>Q02033</accession>
<name>HUNB_SCHLA</name>
<keyword id="KW-0217">Developmental protein</keyword>
<keyword id="KW-0238">DNA-binding</keyword>
<keyword id="KW-0302">Gap protein</keyword>
<keyword id="KW-0479">Metal-binding</keyword>
<keyword id="KW-0539">Nucleus</keyword>
<keyword id="KW-0677">Repeat</keyword>
<keyword id="KW-0862">Zinc</keyword>
<keyword id="KW-0863">Zinc-finger</keyword>